<protein>
    <recommendedName>
        <fullName evidence="1">DNA repair protein RecO</fullName>
    </recommendedName>
    <alternativeName>
        <fullName evidence="1">Recombination protein O</fullName>
    </alternativeName>
</protein>
<accession>Q03SC7</accession>
<keyword id="KW-0227">DNA damage</keyword>
<keyword id="KW-0233">DNA recombination</keyword>
<keyword id="KW-0234">DNA repair</keyword>
<keyword id="KW-1185">Reference proteome</keyword>
<reference key="1">
    <citation type="journal article" date="2006" name="Proc. Natl. Acad. Sci. U.S.A.">
        <title>Comparative genomics of the lactic acid bacteria.</title>
        <authorList>
            <person name="Makarova K.S."/>
            <person name="Slesarev A."/>
            <person name="Wolf Y.I."/>
            <person name="Sorokin A."/>
            <person name="Mirkin B."/>
            <person name="Koonin E.V."/>
            <person name="Pavlov A."/>
            <person name="Pavlova N."/>
            <person name="Karamychev V."/>
            <person name="Polouchine N."/>
            <person name="Shakhova V."/>
            <person name="Grigoriev I."/>
            <person name="Lou Y."/>
            <person name="Rohksar D."/>
            <person name="Lucas S."/>
            <person name="Huang K."/>
            <person name="Goodstein D.M."/>
            <person name="Hawkins T."/>
            <person name="Plengvidhya V."/>
            <person name="Welker D."/>
            <person name="Hughes J."/>
            <person name="Goh Y."/>
            <person name="Benson A."/>
            <person name="Baldwin K."/>
            <person name="Lee J.-H."/>
            <person name="Diaz-Muniz I."/>
            <person name="Dosti B."/>
            <person name="Smeianov V."/>
            <person name="Wechter W."/>
            <person name="Barabote R."/>
            <person name="Lorca G."/>
            <person name="Altermann E."/>
            <person name="Barrangou R."/>
            <person name="Ganesan B."/>
            <person name="Xie Y."/>
            <person name="Rawsthorne H."/>
            <person name="Tamir D."/>
            <person name="Parker C."/>
            <person name="Breidt F."/>
            <person name="Broadbent J.R."/>
            <person name="Hutkins R."/>
            <person name="O'Sullivan D."/>
            <person name="Steele J."/>
            <person name="Unlu G."/>
            <person name="Saier M.H. Jr."/>
            <person name="Klaenhammer T."/>
            <person name="Richardson P."/>
            <person name="Kozyavkin S."/>
            <person name="Weimer B.C."/>
            <person name="Mills D.A."/>
        </authorList>
    </citation>
    <scope>NUCLEOTIDE SEQUENCE [LARGE SCALE GENOMIC DNA]</scope>
    <source>
        <strain>ATCC 367 / BCRC 12310 / CIP 105137 / JCM 1170 / LMG 11437 / NCIMB 947 / NCTC 947</strain>
    </source>
</reference>
<organism>
    <name type="scientific">Levilactobacillus brevis (strain ATCC 367 / BCRC 12310 / CIP 105137 / JCM 1170 / LMG 11437 / NCIMB 947 / NCTC 947)</name>
    <name type="common">Lactobacillus brevis</name>
    <dbReference type="NCBI Taxonomy" id="387344"/>
    <lineage>
        <taxon>Bacteria</taxon>
        <taxon>Bacillati</taxon>
        <taxon>Bacillota</taxon>
        <taxon>Bacilli</taxon>
        <taxon>Lactobacillales</taxon>
        <taxon>Lactobacillaceae</taxon>
        <taxon>Levilactobacillus</taxon>
    </lineage>
</organism>
<gene>
    <name evidence="1" type="primary">recO</name>
    <name type="ordered locus">LVIS_0752</name>
</gene>
<feature type="chain" id="PRO_0000325201" description="DNA repair protein RecO">
    <location>
        <begin position="1"/>
        <end position="260"/>
    </location>
</feature>
<dbReference type="EMBL" id="CP000416">
    <property type="protein sequence ID" value="ABJ63895.1"/>
    <property type="molecule type" value="Genomic_DNA"/>
</dbReference>
<dbReference type="RefSeq" id="WP_011667526.1">
    <property type="nucleotide sequence ID" value="NC_008497.1"/>
</dbReference>
<dbReference type="SMR" id="Q03SC7"/>
<dbReference type="STRING" id="387344.LVIS_0752"/>
<dbReference type="KEGG" id="lbr:LVIS_0752"/>
<dbReference type="PATRIC" id="fig|387344.15.peg.725"/>
<dbReference type="eggNOG" id="COG1381">
    <property type="taxonomic scope" value="Bacteria"/>
</dbReference>
<dbReference type="HOGENOM" id="CLU_066632_4_0_9"/>
<dbReference type="Proteomes" id="UP000001652">
    <property type="component" value="Chromosome"/>
</dbReference>
<dbReference type="GO" id="GO:0043590">
    <property type="term" value="C:bacterial nucleoid"/>
    <property type="evidence" value="ECO:0007669"/>
    <property type="project" value="TreeGrafter"/>
</dbReference>
<dbReference type="GO" id="GO:0006310">
    <property type="term" value="P:DNA recombination"/>
    <property type="evidence" value="ECO:0007669"/>
    <property type="project" value="UniProtKB-UniRule"/>
</dbReference>
<dbReference type="GO" id="GO:0006302">
    <property type="term" value="P:double-strand break repair"/>
    <property type="evidence" value="ECO:0007669"/>
    <property type="project" value="TreeGrafter"/>
</dbReference>
<dbReference type="Gene3D" id="2.40.50.140">
    <property type="entry name" value="Nucleic acid-binding proteins"/>
    <property type="match status" value="1"/>
</dbReference>
<dbReference type="Gene3D" id="1.20.1440.120">
    <property type="entry name" value="Recombination protein O, C-terminal domain"/>
    <property type="match status" value="1"/>
</dbReference>
<dbReference type="HAMAP" id="MF_00201">
    <property type="entry name" value="RecO"/>
    <property type="match status" value="1"/>
</dbReference>
<dbReference type="InterPro" id="IPR037278">
    <property type="entry name" value="ARFGAP/RecO"/>
</dbReference>
<dbReference type="InterPro" id="IPR022572">
    <property type="entry name" value="DNA_rep/recomb_RecO_N"/>
</dbReference>
<dbReference type="InterPro" id="IPR012340">
    <property type="entry name" value="NA-bd_OB-fold"/>
</dbReference>
<dbReference type="InterPro" id="IPR003717">
    <property type="entry name" value="RecO"/>
</dbReference>
<dbReference type="InterPro" id="IPR042242">
    <property type="entry name" value="RecO_C"/>
</dbReference>
<dbReference type="NCBIfam" id="TIGR00613">
    <property type="entry name" value="reco"/>
    <property type="match status" value="1"/>
</dbReference>
<dbReference type="PANTHER" id="PTHR33991">
    <property type="entry name" value="DNA REPAIR PROTEIN RECO"/>
    <property type="match status" value="1"/>
</dbReference>
<dbReference type="PANTHER" id="PTHR33991:SF1">
    <property type="entry name" value="DNA REPAIR PROTEIN RECO"/>
    <property type="match status" value="1"/>
</dbReference>
<dbReference type="Pfam" id="PF02565">
    <property type="entry name" value="RecO_C"/>
    <property type="match status" value="1"/>
</dbReference>
<dbReference type="Pfam" id="PF11967">
    <property type="entry name" value="RecO_N"/>
    <property type="match status" value="1"/>
</dbReference>
<dbReference type="SUPFAM" id="SSF57863">
    <property type="entry name" value="ArfGap/RecO-like zinc finger"/>
    <property type="match status" value="1"/>
</dbReference>
<dbReference type="SUPFAM" id="SSF50249">
    <property type="entry name" value="Nucleic acid-binding proteins"/>
    <property type="match status" value="1"/>
</dbReference>
<sequence length="260" mass="30004">MARNVTDFHGILLFRRDYAERDFLIKFFTQEFGKKMFLVRGAKKRGFKMVADILPFTVGSYVGDIADDGLSYIRTARETRQFQDISADIFKNAYATYIMSLVDTAFPDSQPLPDWYHRVQRALTLIDDGVNAAIVTNIMEIQLMPAFGVAPQLQGCAVCGRNDLPFDYSESYGGLLCQAHWTLDPRRLHVSQRTIYYLRQFSVLDLDRLHTIKVKPQTEHALRQLMDEIYDSQIGVHPKSKRFLDQMQSWSARLKPPTDH</sequence>
<comment type="function">
    <text evidence="1">Involved in DNA repair and RecF pathway recombination.</text>
</comment>
<comment type="similarity">
    <text evidence="1">Belongs to the RecO family.</text>
</comment>
<name>RECO_LEVBA</name>
<evidence type="ECO:0000255" key="1">
    <source>
        <dbReference type="HAMAP-Rule" id="MF_00201"/>
    </source>
</evidence>
<proteinExistence type="inferred from homology"/>